<organism>
    <name type="scientific">Spinacia oleracea</name>
    <name type="common">Spinach</name>
    <dbReference type="NCBI Taxonomy" id="3562"/>
    <lineage>
        <taxon>Eukaryota</taxon>
        <taxon>Viridiplantae</taxon>
        <taxon>Streptophyta</taxon>
        <taxon>Embryophyta</taxon>
        <taxon>Tracheophyta</taxon>
        <taxon>Spermatophyta</taxon>
        <taxon>Magnoliopsida</taxon>
        <taxon>eudicotyledons</taxon>
        <taxon>Gunneridae</taxon>
        <taxon>Pentapetalae</taxon>
        <taxon>Caryophyllales</taxon>
        <taxon>Chenopodiaceae</taxon>
        <taxon>Chenopodioideae</taxon>
        <taxon>Anserineae</taxon>
        <taxon>Spinacia</taxon>
    </lineage>
</organism>
<dbReference type="EC" id="2.3.1.15"/>
<dbReference type="EMBL" id="X77370">
    <property type="protein sequence ID" value="CAA54559.1"/>
    <property type="molecule type" value="mRNA"/>
</dbReference>
<dbReference type="EMBL" id="Z49091">
    <property type="protein sequence ID" value="CAA88913.1"/>
    <property type="molecule type" value="mRNA"/>
</dbReference>
<dbReference type="PIR" id="S51768">
    <property type="entry name" value="S51768"/>
</dbReference>
<dbReference type="SMR" id="Q43869"/>
<dbReference type="OrthoDB" id="524544at2759"/>
<dbReference type="UniPathway" id="UPA00557">
    <property type="reaction ID" value="UER00612"/>
</dbReference>
<dbReference type="Proteomes" id="UP001155700">
    <property type="component" value="Unplaced"/>
</dbReference>
<dbReference type="GO" id="GO:0009570">
    <property type="term" value="C:chloroplast stroma"/>
    <property type="evidence" value="ECO:0000318"/>
    <property type="project" value="GO_Central"/>
</dbReference>
<dbReference type="GO" id="GO:0004366">
    <property type="term" value="F:glycerol-3-phosphate O-acyltransferase activity"/>
    <property type="evidence" value="ECO:0000318"/>
    <property type="project" value="GO_Central"/>
</dbReference>
<dbReference type="GO" id="GO:0016024">
    <property type="term" value="P:CDP-diacylglycerol biosynthetic process"/>
    <property type="evidence" value="ECO:0007669"/>
    <property type="project" value="UniProtKB-UniPathway"/>
</dbReference>
<dbReference type="GO" id="GO:0006655">
    <property type="term" value="P:phosphatidylglycerol biosynthetic process"/>
    <property type="evidence" value="ECO:0000318"/>
    <property type="project" value="GO_Central"/>
</dbReference>
<dbReference type="Gene3D" id="3.40.1130.10">
    <property type="entry name" value="Glycerol-3-phosphate (1)-acyltransferase"/>
    <property type="match status" value="1"/>
</dbReference>
<dbReference type="Gene3D" id="1.10.1200.50">
    <property type="entry name" value="Glycerol-3-phosphate acyltransferase, alpha helical bundle, N-terminal"/>
    <property type="match status" value="1"/>
</dbReference>
<dbReference type="InterPro" id="IPR016222">
    <property type="entry name" value="G3P_O-acylTrfase_chlp"/>
</dbReference>
<dbReference type="InterPro" id="IPR023083">
    <property type="entry name" value="G3P_O-acylTrfase_N"/>
</dbReference>
<dbReference type="InterPro" id="IPR038114">
    <property type="entry name" value="GPAT_N_sf"/>
</dbReference>
<dbReference type="InterPro" id="IPR002123">
    <property type="entry name" value="Plipid/glycerol_acylTrfase"/>
</dbReference>
<dbReference type="PANTHER" id="PTHR35695">
    <property type="entry name" value="GLYCEROL-3-PHOSPHATE ACYLTRANSFERASE, CHLOROPLASTIC"/>
    <property type="match status" value="1"/>
</dbReference>
<dbReference type="PANTHER" id="PTHR35695:SF1">
    <property type="entry name" value="GLYCEROL-3-PHOSPHATE ACYLTRANSFERASE, CHLOROPLASTIC"/>
    <property type="match status" value="1"/>
</dbReference>
<dbReference type="Pfam" id="PF01553">
    <property type="entry name" value="Acyltransferase"/>
    <property type="match status" value="1"/>
</dbReference>
<dbReference type="Pfam" id="PF14829">
    <property type="entry name" value="GPAT_N"/>
    <property type="match status" value="1"/>
</dbReference>
<dbReference type="PIRSF" id="PIRSF000431">
    <property type="entry name" value="Glycerol-3-P_O-acyltransfrase"/>
    <property type="match status" value="1"/>
</dbReference>
<dbReference type="SMART" id="SM00563">
    <property type="entry name" value="PlsC"/>
    <property type="match status" value="1"/>
</dbReference>
<dbReference type="SUPFAM" id="SSF69593">
    <property type="entry name" value="Glycerol-3-phosphate (1)-acyltransferase"/>
    <property type="match status" value="1"/>
</dbReference>
<keyword id="KW-0012">Acyltransferase</keyword>
<keyword id="KW-0150">Chloroplast</keyword>
<keyword id="KW-0444">Lipid biosynthesis</keyword>
<keyword id="KW-0443">Lipid metabolism</keyword>
<keyword id="KW-0594">Phospholipid biosynthesis</keyword>
<keyword id="KW-1208">Phospholipid metabolism</keyword>
<keyword id="KW-0934">Plastid</keyword>
<keyword id="KW-1185">Reference proteome</keyword>
<keyword id="KW-0808">Transferase</keyword>
<keyword id="KW-0809">Transit peptide</keyword>
<sequence length="472" mass="52180">MLVLSSSAPPVLEVCKDRVSSSFSTSSSSSSSAFSAVVFRRSFFTRFNSSLICCCSSKLKLMADTALPSSSSSTSASASYSAAAKSVEEENHEIPVKKEDDNQLLRSRTYRNVRSAEELISEIKRESEIGRLPKSVAYAMEGLFHYYRNAVLSSGISHADEIVLSNMSVMLDFVLLDIEDPFVFPPFHKAIREPADYYSFGQDYIRPLVDFGNSYVGNIAIFQEMEEKLKQGDNIILMSNHQSEADPAVIALLLEKTNSLIAENLIYIAGDRVITDPLCKPFSMGRNLLCVYSKKHMYDDPELVDVKKRANTRSLKELVLLLRGGSKIIWIAPSGGRDRPDAVTGEWYPGTFDFAALDNMRRLVEHAGRPGHIYPLALLCYDIMPPPAQVEKEIGEKRVMSFHGVGVSVEPEINYNDVSLGCKNDEEAKSVYGQALYNSVNEQYNVLKAAIHGKQGSGASTPTTSLSQPWAS</sequence>
<evidence type="ECO:0000250" key="1"/>
<evidence type="ECO:0000255" key="2"/>
<evidence type="ECO:0000305" key="3"/>
<comment type="function">
    <text>Esterifies acyl-group from acyl-ACP to the sn-1 position of glycerol-3-phosphate. The enzyme from chilling-resistant plants discriminates against non-fluid palmitic acid and selects oleic acid whereas the enzyme from sensitive plants accepts both fatty acids. This is an oleate-selective acyltransferase.</text>
</comment>
<comment type="catalytic activity">
    <reaction>
        <text>sn-glycerol 3-phosphate + an acyl-CoA = a 1-acyl-sn-glycero-3-phosphate + CoA</text>
        <dbReference type="Rhea" id="RHEA:15325"/>
        <dbReference type="ChEBI" id="CHEBI:57287"/>
        <dbReference type="ChEBI" id="CHEBI:57597"/>
        <dbReference type="ChEBI" id="CHEBI:57970"/>
        <dbReference type="ChEBI" id="CHEBI:58342"/>
        <dbReference type="EC" id="2.3.1.15"/>
    </reaction>
</comment>
<comment type="pathway">
    <text>Phospholipid metabolism; CDP-diacylglycerol biosynthesis; CDP-diacylglycerol from sn-glycerol 3-phosphate: step 1/3.</text>
</comment>
<comment type="subcellular location">
    <subcellularLocation>
        <location>Plastid</location>
        <location>Chloroplast stroma</location>
    </subcellularLocation>
</comment>
<comment type="domain">
    <text evidence="1">The HXXXXD motif is essential for acyltransferase activity and may constitute the binding site for the phosphate moiety of the glycerol-3-phosphate.</text>
</comment>
<comment type="similarity">
    <text evidence="3">Belongs to the GPAT/DAPAT family.</text>
</comment>
<name>PLSB_SPIOL</name>
<feature type="transit peptide" description="Chloroplast" evidence="2">
    <location>
        <begin position="1"/>
        <end position="102"/>
    </location>
</feature>
<feature type="chain" id="PRO_0000024700" description="Glycerol-3-phosphate acyltransferase, chloroplastic">
    <location>
        <begin position="103"/>
        <end position="472"/>
    </location>
</feature>
<feature type="short sequence motif" description="HXXXXD motif">
    <location>
        <begin position="241"/>
        <end position="246"/>
    </location>
</feature>
<reference key="1">
    <citation type="online journal article" date="1995" name="Plant Gene Register">
        <title>Nucleotide sequence of cDNA from Spinacia oleracea encoding plastid glycerol-3-phosphate acyltransferase.</title>
        <authorList>
            <person name="Ishikazi-Nishizawa O."/>
            <person name="Azuma M."/>
            <person name="Ohtani T."/>
            <person name="Murata N."/>
            <person name="Toguri T."/>
        </authorList>
        <locator>PGR95-014</locator>
    </citation>
    <scope>NUCLEOTIDE SEQUENCE [MRNA]</scope>
    <source>
        <strain>cv. Birofure</strain>
        <tissue>Seedling</tissue>
    </source>
</reference>
<reference key="2">
    <citation type="online journal article" date="1996" name="Plant Gene Register">
        <title>Conserved intron position in 3' untranslated region of a cDNA encoding the plastidial sn-glycerol-3-phosphate acyltransferase of spinach.</title>
        <authorList>
            <person name="Wolter F.P."/>
        </authorList>
        <locator>PGR96-118</locator>
    </citation>
    <scope>NUCLEOTIDE SEQUENCE [MRNA]</scope>
    <source>
        <strain>cv. Melody</strain>
        <tissue>Leaf</tissue>
    </source>
</reference>
<reference key="3">
    <citation type="journal article" date="1983" name="Eur. J. Biochem.">
        <title>Specificities and selectivities of glycerol-3-phosphate acyltransferase and monoacylglycerol-3-phosphate acyltransferase from pea and spinach chloroplasts.</title>
        <authorList>
            <person name="Frentzen M."/>
            <person name="Heinz E."/>
            <person name="McKeon T.A."/>
            <person name="Stumpf P.K."/>
        </authorList>
    </citation>
    <scope>CHARACTERIZATION</scope>
</reference>
<gene>
    <name type="primary">GAT</name>
    <name type="synonym">ACT1</name>
</gene>
<proteinExistence type="evidence at protein level"/>
<protein>
    <recommendedName>
        <fullName>Glycerol-3-phosphate acyltransferase, chloroplastic</fullName>
        <shortName>GPAT</shortName>
        <ecNumber>2.3.1.15</ecNumber>
    </recommendedName>
</protein>
<accession>Q43869</accession>